<gene>
    <name type="primary">IL6</name>
</gene>
<sequence>MTSFSTSAFRPVAFSLGLLLVMPAAFPAPVTLGEDSKEVAAPNRQLLTSTERIDKHIWYILDGISALRKEICNKSNMCESSKEALAENNLNLPKMAEKDGCFQSGFNEETCLLKITTGLLEFEVYLEYLQNRFESSKEQAGAVQMSTKGLIQSLQRKAKNLSAIATPDPATNASLLTKLQAQDQWLQGVTTHLILRSFKEFLQCSLRALRQM</sequence>
<comment type="function">
    <text evidence="2">Cytokine with a wide variety of biological functions in immunity, tissue regeneration, and metabolism. Binds to IL6R, then the complex associates to the signaling subunit IL6ST/gp130 to trigger the intracellular IL6-signaling pathway. The interaction with the membrane-bound IL6R and IL6ST stimulates 'classic signaling', whereas the binding of IL6 and soluble IL6R to IL6ST stimulates 'trans-signaling'. Alternatively, 'cluster signaling' occurs when membrane-bound IL6:IL6R complexes on transmitter cells activate IL6ST receptors on neighboring receiver cells.</text>
</comment>
<comment type="function">
    <text evidence="2 3">IL6 is a potent inducer of the acute phase response. Rapid production of IL6 contributes to host defense during infection and tissue injury, but excessive IL6 synthesis is involved in disease pathology. In the innate immune response, is synthesized by myeloid cells, such as macrophages and dendritic cells, upon recognition of pathogens through toll-like receptors (TLRs) at the site of infection or tissue injury (By similarity). In the adaptive immune response, is required for the differentiation of B cells into immunoglobulin-secreting cells. Plays a major role in the differentiation of CD4(+) T cell subsets. Essential factor for the development of T follicular helper (Tfh) cells that are required for the induction of germinal-center formation. Required to drive naive CD4(+) T cells to the Th17 lineage. Also required for proliferation of myeloma cells and the survival of plasmablast cells (By similarity).</text>
</comment>
<comment type="function">
    <text evidence="2 3">Acts as an essential factor in bone homeostasis and on vessels directly or indirectly by induction of VEGF, resulting in increased angiogenesis activity and vascular permeability. Induces, through 'trans-signaling' and synergistically with IL1B and TNF, the production of VEGF. Involved in metabolic controls, is discharged into the bloodstream after muscle contraction increasing lipolysis and improving insulin resistance (By similarity). 'Trans-signaling' in central nervous system also regulates energy and glucose homeostasis. Mediates, through GLP-1, crosstalk between insulin-sensitive tissues, intestinal L cells and pancreatic islets to adapt to changes in insulin demand (By similarity). Also acts as a myokine (By similarity). Plays a protective role during liver injury, being required for maintenance of tissue regeneration (By similarity). Also has a pivotal role in iron metabolism by regulating HAMP/hepcidin expression upon inflammation or bacterial infection (By similarity). Through activation of IL6ST-YAP-NOTCH pathway, induces inflammation-induced epithelial regeneration (By similarity).</text>
</comment>
<comment type="subunit">
    <text evidence="2">Component of a hexamer of two molecules each of IL6, IL6R and IL6ST; first binds to IL6R to associate with the signaling subunit IL6ST. Interacts with IL6R (via the N-terminal ectodomain); this interaction may be affected by IL6R-binding with SORL1, hence decreasing IL6 cis signaling. Interacts with SORL1 (via the N-terminal ectodomain); this interaction leads to IL6 internalization and lysosomal degradation. May form a trimeric complex with the soluble SORL1 ectodomain and soluble IL6R receptor; this interaction might stabilize circulating IL6, hence promoting IL6 trans signaling.</text>
</comment>
<comment type="subcellular location">
    <subcellularLocation>
        <location evidence="2">Secreted</location>
    </subcellularLocation>
</comment>
<comment type="similarity">
    <text evidence="5">Belongs to the IL-6 superfamily.</text>
</comment>
<evidence type="ECO:0000250" key="1"/>
<evidence type="ECO:0000250" key="2">
    <source>
        <dbReference type="UniProtKB" id="P05231"/>
    </source>
</evidence>
<evidence type="ECO:0000250" key="3">
    <source>
        <dbReference type="UniProtKB" id="P08505"/>
    </source>
</evidence>
<evidence type="ECO:0000255" key="4"/>
<evidence type="ECO:0000305" key="5"/>
<protein>
    <recommendedName>
        <fullName>Interleukin-6</fullName>
        <shortName>IL-6</shortName>
    </recommendedName>
</protein>
<keyword id="KW-0011">Acute phase</keyword>
<keyword id="KW-0202">Cytokine</keyword>
<keyword id="KW-1015">Disulfide bond</keyword>
<keyword id="KW-0325">Glycoprotein</keyword>
<keyword id="KW-0339">Growth factor</keyword>
<keyword id="KW-0597">Phosphoprotein</keyword>
<keyword id="KW-0964">Secreted</keyword>
<keyword id="KW-0732">Signal</keyword>
<reference key="1">
    <citation type="journal article" date="2002" name="Immunogenetics">
        <title>Molecular cloning, characterization, and quantification of squirrel monkey (Saimiri sciureus) Th1 and Th2 cytokines.</title>
        <authorList>
            <person name="Heraud J.M."/>
            <person name="Lavergne A."/>
            <person name="Kazanji M."/>
        </authorList>
    </citation>
    <scope>NUCLEOTIDE SEQUENCE [MRNA]</scope>
</reference>
<accession>Q8MKH0</accession>
<proteinExistence type="evidence at transcript level"/>
<organism>
    <name type="scientific">Saimiri sciureus</name>
    <name type="common">Common squirrel monkey</name>
    <dbReference type="NCBI Taxonomy" id="9521"/>
    <lineage>
        <taxon>Eukaryota</taxon>
        <taxon>Metazoa</taxon>
        <taxon>Chordata</taxon>
        <taxon>Craniata</taxon>
        <taxon>Vertebrata</taxon>
        <taxon>Euteleostomi</taxon>
        <taxon>Mammalia</taxon>
        <taxon>Eutheria</taxon>
        <taxon>Euarchontoglires</taxon>
        <taxon>Primates</taxon>
        <taxon>Haplorrhini</taxon>
        <taxon>Platyrrhini</taxon>
        <taxon>Cebidae</taxon>
        <taxon>Saimiriinae</taxon>
        <taxon>Saimiri</taxon>
    </lineage>
</organism>
<feature type="signal peptide" evidence="1">
    <location>
        <begin position="1"/>
        <end position="29"/>
    </location>
</feature>
<feature type="chain" id="PRO_0000015594" description="Interleukin-6">
    <location>
        <begin position="30"/>
        <end position="212"/>
    </location>
</feature>
<feature type="modified residue" description="Phosphoserine" evidence="2">
    <location>
        <position position="81"/>
    </location>
</feature>
<feature type="glycosylation site" description="N-linked (GlcNAc...) asparagine" evidence="4">
    <location>
        <position position="73"/>
    </location>
</feature>
<feature type="glycosylation site" description="N-linked (GlcNAc...) asparagine" evidence="4">
    <location>
        <position position="160"/>
    </location>
</feature>
<feature type="glycosylation site" description="N-linked (GlcNAc...) asparagine" evidence="4">
    <location>
        <position position="172"/>
    </location>
</feature>
<feature type="disulfide bond" evidence="1">
    <location>
        <begin position="72"/>
        <end position="78"/>
    </location>
</feature>
<feature type="disulfide bond" evidence="1">
    <location>
        <begin position="101"/>
        <end position="111"/>
    </location>
</feature>
<name>IL6_SAISC</name>
<dbReference type="EMBL" id="AF294757">
    <property type="protein sequence ID" value="AAK92044.1"/>
    <property type="molecule type" value="mRNA"/>
</dbReference>
<dbReference type="SMR" id="Q8MKH0"/>
<dbReference type="GlyCosmos" id="Q8MKH0">
    <property type="glycosylation" value="3 sites, No reported glycans"/>
</dbReference>
<dbReference type="GO" id="GO:0005615">
    <property type="term" value="C:extracellular space"/>
    <property type="evidence" value="ECO:0007669"/>
    <property type="project" value="UniProtKB-KW"/>
</dbReference>
<dbReference type="GO" id="GO:0005896">
    <property type="term" value="C:interleukin-6 receptor complex"/>
    <property type="evidence" value="ECO:0007669"/>
    <property type="project" value="TreeGrafter"/>
</dbReference>
<dbReference type="GO" id="GO:0005125">
    <property type="term" value="F:cytokine activity"/>
    <property type="evidence" value="ECO:0007669"/>
    <property type="project" value="UniProtKB-KW"/>
</dbReference>
<dbReference type="GO" id="GO:0008083">
    <property type="term" value="F:growth factor activity"/>
    <property type="evidence" value="ECO:0007669"/>
    <property type="project" value="UniProtKB-KW"/>
</dbReference>
<dbReference type="GO" id="GO:0005138">
    <property type="term" value="F:interleukin-6 receptor binding"/>
    <property type="evidence" value="ECO:0007669"/>
    <property type="project" value="InterPro"/>
</dbReference>
<dbReference type="GO" id="GO:0006953">
    <property type="term" value="P:acute-phase response"/>
    <property type="evidence" value="ECO:0007669"/>
    <property type="project" value="UniProtKB-KW"/>
</dbReference>
<dbReference type="GO" id="GO:0042593">
    <property type="term" value="P:glucose homeostasis"/>
    <property type="evidence" value="ECO:0000250"/>
    <property type="project" value="UniProtKB"/>
</dbReference>
<dbReference type="GO" id="GO:0072574">
    <property type="term" value="P:hepatocyte proliferation"/>
    <property type="evidence" value="ECO:0000250"/>
    <property type="project" value="UniProtKB"/>
</dbReference>
<dbReference type="GO" id="GO:0070102">
    <property type="term" value="P:interleukin-6-mediated signaling pathway"/>
    <property type="evidence" value="ECO:0000250"/>
    <property type="project" value="UniProtKB"/>
</dbReference>
<dbReference type="GO" id="GO:0097421">
    <property type="term" value="P:liver regeneration"/>
    <property type="evidence" value="ECO:0000250"/>
    <property type="project" value="UniProtKB"/>
</dbReference>
<dbReference type="GO" id="GO:0051240">
    <property type="term" value="P:positive regulation of multicellular organismal process"/>
    <property type="evidence" value="ECO:0007669"/>
    <property type="project" value="UniProtKB-ARBA"/>
</dbReference>
<dbReference type="GO" id="GO:0046427">
    <property type="term" value="P:positive regulation of receptor signaling pathway via JAK-STAT"/>
    <property type="evidence" value="ECO:0007669"/>
    <property type="project" value="TreeGrafter"/>
</dbReference>
<dbReference type="GO" id="GO:1904894">
    <property type="term" value="P:positive regulation of receptor signaling pathway via STAT"/>
    <property type="evidence" value="ECO:0000250"/>
    <property type="project" value="UniProtKB"/>
</dbReference>
<dbReference type="GO" id="GO:0070092">
    <property type="term" value="P:regulation of glucagon secretion"/>
    <property type="evidence" value="ECO:0000250"/>
    <property type="project" value="UniProtKB"/>
</dbReference>
<dbReference type="GO" id="GO:0050796">
    <property type="term" value="P:regulation of insulin secretion"/>
    <property type="evidence" value="ECO:0000250"/>
    <property type="project" value="UniProtKB"/>
</dbReference>
<dbReference type="GO" id="GO:0014823">
    <property type="term" value="P:response to activity"/>
    <property type="evidence" value="ECO:0000250"/>
    <property type="project" value="UniProtKB"/>
</dbReference>
<dbReference type="GO" id="GO:0072540">
    <property type="term" value="P:T-helper 17 cell lineage commitment"/>
    <property type="evidence" value="ECO:0000250"/>
    <property type="project" value="UniProtKB"/>
</dbReference>
<dbReference type="GO" id="GO:0010573">
    <property type="term" value="P:vascular endothelial growth factor production"/>
    <property type="evidence" value="ECO:0000250"/>
    <property type="project" value="UniProtKB"/>
</dbReference>
<dbReference type="FunFam" id="1.20.1250.10:FF:000006">
    <property type="entry name" value="Interleukin-6"/>
    <property type="match status" value="1"/>
</dbReference>
<dbReference type="Gene3D" id="1.20.1250.10">
    <property type="match status" value="1"/>
</dbReference>
<dbReference type="InterPro" id="IPR009079">
    <property type="entry name" value="4_helix_cytokine-like_core"/>
</dbReference>
<dbReference type="InterPro" id="IPR003574">
    <property type="entry name" value="IL-6-like"/>
</dbReference>
<dbReference type="InterPro" id="IPR030474">
    <property type="entry name" value="IL-6/GCSF/MGF"/>
</dbReference>
<dbReference type="InterPro" id="IPR030473">
    <property type="entry name" value="IL6/GCSF/MGF_CS"/>
</dbReference>
<dbReference type="PANTHER" id="PTHR48494">
    <property type="entry name" value="INTERLEUKIN-6"/>
    <property type="match status" value="1"/>
</dbReference>
<dbReference type="PANTHER" id="PTHR48494:SF1">
    <property type="entry name" value="INTERLEUKIN-6"/>
    <property type="match status" value="1"/>
</dbReference>
<dbReference type="Pfam" id="PF00489">
    <property type="entry name" value="IL6"/>
    <property type="match status" value="1"/>
</dbReference>
<dbReference type="PIRSF" id="PIRSF001935">
    <property type="entry name" value="IL6_MGF_GCSF"/>
    <property type="match status" value="1"/>
</dbReference>
<dbReference type="PRINTS" id="PR00433">
    <property type="entry name" value="IL6GCSFMGF"/>
</dbReference>
<dbReference type="PRINTS" id="PR00434">
    <property type="entry name" value="INTERLEUKIN6"/>
</dbReference>
<dbReference type="SMART" id="SM00126">
    <property type="entry name" value="IL6"/>
    <property type="match status" value="1"/>
</dbReference>
<dbReference type="SUPFAM" id="SSF47266">
    <property type="entry name" value="4-helical cytokines"/>
    <property type="match status" value="1"/>
</dbReference>
<dbReference type="PROSITE" id="PS00254">
    <property type="entry name" value="INTERLEUKIN_6"/>
    <property type="match status" value="1"/>
</dbReference>